<name>DNBI_TUHV2</name>
<proteinExistence type="inferred from homology"/>
<organism>
    <name type="scientific">Tupaiid herpesvirus (strain 2)</name>
    <name type="common">TuHV-2</name>
    <name type="synonym">Herpesvirus tupaia (strain 2)</name>
    <dbReference type="NCBI Taxonomy" id="132678"/>
    <lineage>
        <taxon>Viruses</taxon>
        <taxon>Duplodnaviria</taxon>
        <taxon>Heunggongvirae</taxon>
        <taxon>Peploviricota</taxon>
        <taxon>Herviviricetes</taxon>
        <taxon>Herpesvirales</taxon>
        <taxon>Orthoherpesviridae</taxon>
        <taxon>Betaherpesvirinae</taxon>
    </lineage>
</organism>
<sequence>MEDDLNTLAPLGPAAWLFVCPRQDEWCDVLAALSLCDRSSSVAIAPLLVDLTVDRDFQVAVRTPISRYEGGVLTKVTSMWPAAFVFHNAEAIVSRTEDHGDVGGLCAEARARFGVASYRAEAERADTDFTELWAALGVDGARVVMYAVVGYGLKELLYAGQLVPCVEEARTVLLGAVEAFKLPLYPATLFADGDATADGAAAVGLRSRTPFVDRRGLYVSALSEALFYYVFTALGQALRFGHTEHLIDEGMKQFLQDTQNSVKLAPQKRYYGYLSQKLTPGERDQLLLCDAIACELAFSFASVYFDSAYEPAPLMNYSEWPLVRAAEGHADLLRRLSELKLHLSAHVGALVFSGNSVLYQTRIAFFSAANKVPAGGTAQDGLLKAVQFCNGLTCLTEDALNDACRTVKFEGPGGGGGGRDEQFTPQHLAWACATSPHLMSDLVWYLNRLAIYNTGQNGGSALYEHLVHCAVNLCPACRGRCCQSCYQTAFVRIQTRLPPLPKQLKREPFVLTLFSRFLCDVDVLGTFGKRYAGDAKEPSAASLAAAPGEARKVGDEAGLGAGGGGPGGRLGVNVDRLKYFNQILDYCKRNSLIDPSTGEDTLAVRGRADFMSALSGLNRCVDEAAMALVSEVRMKSNRDEVAGATQAFNLDLNPYAVAFSPLLAHQYYRAFFLIVQNLALVSASSYVVDNPLTVSSLSRWLLQHFQSICGAFASNSARKGLLFTKDAKCSKSVEFERFMDFALYAASGRHVLLSTETKLCKLSVCMLRTCRVKNRPIPRGGKGLPVSVFFKRDVVQRRNPVRGCLAFLLYAFHERLFPGCGLSCLDFWQKVYHNALPKSVAIGKMEEFNAFVKYVLNVTTEYNEHDLIDVPPSNLLSYVEYRFHNKFLCFYGFGDYLSTLHGLSTKLVPQNHLNFPHLLAASPKFASVAEYVLYFKKLKLDGVPPPHVATFSRESLVRSVFENRSLVTVAFGIEKYSTSGGSREVFHFGQIGYFAGNGVERSLNVNSMGGGDYRYMRQRFVLATRLVDLLLRRSRRETVLFDADLLRTRVLAALESHDTQLDPELAAIAEIMDGRGGEPPEYEDVLFFVDGQECLAASIVGKIKELIKKGVEDFSLTALGADAGAGGGPAGSAGGPESGGGAGAAGGEGTYDLSALFLDVENECVVLEGPTAAALDGGGDGDECAFPAKRLRL</sequence>
<gene>
    <name evidence="1" type="primary">DBP</name>
</gene>
<evidence type="ECO:0000255" key="1">
    <source>
        <dbReference type="HAMAP-Rule" id="MF_04007"/>
    </source>
</evidence>
<evidence type="ECO:0000256" key="2">
    <source>
        <dbReference type="SAM" id="MobiDB-lite"/>
    </source>
</evidence>
<feature type="chain" id="PRO_0000115756" description="Major DNA-binding protein">
    <location>
        <begin position="1"/>
        <end position="1193"/>
    </location>
</feature>
<feature type="region of interest" description="Disordered" evidence="2">
    <location>
        <begin position="1125"/>
        <end position="1145"/>
    </location>
</feature>
<feature type="region of interest" description="Required for nuclear localization" evidence="1">
    <location>
        <begin position="1170"/>
        <end position="1193"/>
    </location>
</feature>
<feature type="short sequence motif" description="Required for filament formation" evidence="1">
    <location>
        <begin position="827"/>
        <end position="828"/>
    </location>
</feature>
<reference key="1">
    <citation type="journal article" date="1999" name="Virus Res.">
        <title>Structural organization of a conserved gene cluster of Tupaia herpesvirus encoding the DNA polymerase, glycoprotein B, a probable processing and transport protein, and the major DNA binding protein.</title>
        <authorList>
            <person name="Bahr U."/>
            <person name="Springfeld C."/>
            <person name="Tidona C.A."/>
            <person name="Darai G."/>
        </authorList>
    </citation>
    <scope>NUCLEOTIDE SEQUENCE [GENOMIC DNA]</scope>
</reference>
<organismHost>
    <name type="scientific">Tupaia belangeri</name>
    <name type="common">Common tree shrew</name>
    <name type="synonym">Tupaia glis belangeri</name>
    <dbReference type="NCBI Taxonomy" id="37347"/>
</organismHost>
<keyword id="KW-0235">DNA replication</keyword>
<keyword id="KW-0238">DNA-binding</keyword>
<keyword id="KW-1048">Host nucleus</keyword>
<dbReference type="EMBL" id="AF084543">
    <property type="protein sequence ID" value="AAD42933.1"/>
    <property type="molecule type" value="Genomic_DNA"/>
</dbReference>
<dbReference type="SMR" id="Q9WRL7"/>
<dbReference type="KEGG" id="vg:921124"/>
<dbReference type="GO" id="GO:0042025">
    <property type="term" value="C:host cell nucleus"/>
    <property type="evidence" value="ECO:0007669"/>
    <property type="project" value="UniProtKB-SubCell"/>
</dbReference>
<dbReference type="GO" id="GO:0003697">
    <property type="term" value="F:single-stranded DNA binding"/>
    <property type="evidence" value="ECO:0007669"/>
    <property type="project" value="InterPro"/>
</dbReference>
<dbReference type="GO" id="GO:0006260">
    <property type="term" value="P:DNA replication"/>
    <property type="evidence" value="ECO:0007669"/>
    <property type="project" value="UniProtKB-KW"/>
</dbReference>
<dbReference type="Gene3D" id="1.20.190.40">
    <property type="entry name" value="Viral ssDNA binding protein, head domain"/>
    <property type="match status" value="1"/>
</dbReference>
<dbReference type="HAMAP" id="MF_04007">
    <property type="entry name" value="HSV_DNBI"/>
    <property type="match status" value="1"/>
</dbReference>
<dbReference type="InterPro" id="IPR035989">
    <property type="entry name" value="DBP_sf"/>
</dbReference>
<dbReference type="InterPro" id="IPR043031">
    <property type="entry name" value="Viral_ssDBP_head"/>
</dbReference>
<dbReference type="InterPro" id="IPR000635">
    <property type="entry name" value="Viral_ssDNA-bd"/>
</dbReference>
<dbReference type="Pfam" id="PF00747">
    <property type="entry name" value="Viral_DNA_bp"/>
    <property type="match status" value="1"/>
</dbReference>
<dbReference type="SUPFAM" id="SSF118208">
    <property type="entry name" value="Viral ssDNA binding protein"/>
    <property type="match status" value="1"/>
</dbReference>
<protein>
    <recommendedName>
        <fullName evidence="1">Major DNA-binding protein</fullName>
    </recommendedName>
</protein>
<comment type="function">
    <text evidence="1">Plays several crucial roles in viral infection. Participates in the opening of the viral DNA origin to initiate replication by interacting with the origin-binding protein. May disrupt loops, hairpins and other secondary structures present on ssDNA to reduce and eliminate pausing of viral DNA polymerase at specific sites during elongation. Promotes viral DNA recombination by performing strand-transfer, characterized by the ability to transfer a DNA strand from a linear duplex to a complementary single-stranded DNA circle. Can also catalyze the renaturation of complementary single strands. Additionally, reorganizes the host cell nucleus, leading to the formation of prereplicative sites and replication compartments. This process is driven by the protein which can form double-helical filaments in the absence of DNA.</text>
</comment>
<comment type="subunit">
    <text evidence="1">Homooligomers. Forms double-helical filaments necessary for the formation of replication compartments within the host nucleus. Interacts with the origin-binding protein. Interacts with the helicase primase complex; this interaction stimulates primer synthesis activity of the helicase-primase complex. Interacts with the DNA polymerase. Interacts with the alkaline exonuclease; this interaction increases its nuclease processivity.</text>
</comment>
<comment type="subcellular location">
    <subcellularLocation>
        <location evidence="1">Host nucleus</location>
    </subcellularLocation>
    <text evidence="1">In the absence of DNA replication, found in the nuclear framework-associated structures (prereplicative sites). As viral DNA replication proceeds, it migrates to globular intranuclear structures (replication compartments).</text>
</comment>
<comment type="similarity">
    <text evidence="1">Belongs to the herpesviridae major DNA-binding protein family.</text>
</comment>
<accession>Q9WRL7</accession>